<comment type="function">
    <text evidence="1">Endonuclease that specifically degrades the RNA of RNA-DNA hybrids.</text>
</comment>
<comment type="catalytic activity">
    <reaction evidence="1">
        <text>Endonucleolytic cleavage to 5'-phosphomonoester.</text>
        <dbReference type="EC" id="3.1.26.4"/>
    </reaction>
</comment>
<comment type="cofactor">
    <cofactor evidence="1">
        <name>Mn(2+)</name>
        <dbReference type="ChEBI" id="CHEBI:29035"/>
    </cofactor>
    <cofactor evidence="1">
        <name>Mg(2+)</name>
        <dbReference type="ChEBI" id="CHEBI:18420"/>
    </cofactor>
    <text evidence="1">Manganese or magnesium. Binds 1 divalent metal ion per monomer in the absence of substrate. May bind a second metal ion after substrate binding.</text>
</comment>
<comment type="subcellular location">
    <subcellularLocation>
        <location evidence="1">Cytoplasm</location>
    </subcellularLocation>
</comment>
<comment type="similarity">
    <text evidence="1">Belongs to the RNase HII family. RnhC subfamily.</text>
</comment>
<accession>B1I9J8</accession>
<proteinExistence type="inferred from homology"/>
<name>RNH3_STRPI</name>
<evidence type="ECO:0000255" key="1">
    <source>
        <dbReference type="HAMAP-Rule" id="MF_00053"/>
    </source>
</evidence>
<evidence type="ECO:0000255" key="2">
    <source>
        <dbReference type="PROSITE-ProRule" id="PRU01319"/>
    </source>
</evidence>
<feature type="chain" id="PRO_1000091681" description="Ribonuclease HIII">
    <location>
        <begin position="1"/>
        <end position="290"/>
    </location>
</feature>
<feature type="domain" description="RNase H type-2" evidence="2">
    <location>
        <begin position="78"/>
        <end position="290"/>
    </location>
</feature>
<feature type="binding site" evidence="1">
    <location>
        <position position="84"/>
    </location>
    <ligand>
        <name>a divalent metal cation</name>
        <dbReference type="ChEBI" id="CHEBI:60240"/>
    </ligand>
</feature>
<feature type="binding site" evidence="1">
    <location>
        <position position="85"/>
    </location>
    <ligand>
        <name>a divalent metal cation</name>
        <dbReference type="ChEBI" id="CHEBI:60240"/>
    </ligand>
</feature>
<feature type="binding site" evidence="1">
    <location>
        <position position="187"/>
    </location>
    <ligand>
        <name>a divalent metal cation</name>
        <dbReference type="ChEBI" id="CHEBI:60240"/>
    </ligand>
</feature>
<organism>
    <name type="scientific">Streptococcus pneumoniae (strain Hungary19A-6)</name>
    <dbReference type="NCBI Taxonomy" id="487214"/>
    <lineage>
        <taxon>Bacteria</taxon>
        <taxon>Bacillati</taxon>
        <taxon>Bacillota</taxon>
        <taxon>Bacilli</taxon>
        <taxon>Lactobacillales</taxon>
        <taxon>Streptococcaceae</taxon>
        <taxon>Streptococcus</taxon>
    </lineage>
</organism>
<sequence length="290" mass="31860">MASITLTPSEKDIQAFLEHYQTSLAPSKNPYIRYFLKLPQATVSIYTSGKILLQGEGAEKYASFFGYQAVEQTSGQNLPLIGTDEVGNGSYFGGLAVVAAFVTPDQHDFLRKLGVGDSKTLTDQKIRQIAPILKEKIQHQALLLSPSKYNEVIGDRYNAVSVKVALHNQAIYLLLQKGVQPEKIVIDAFTSAKNYDKYLAQETNRFSNPISLEEKAEGKYLAVAVSSVIARDLFLENLENLGRELGYQLPSGAGTASDKVASQILQAYGMQGLNFCAKLHFKNTEKAKNA</sequence>
<dbReference type="EC" id="3.1.26.4" evidence="1"/>
<dbReference type="EMBL" id="CP000936">
    <property type="protein sequence ID" value="ACA37430.1"/>
    <property type="molecule type" value="Genomic_DNA"/>
</dbReference>
<dbReference type="RefSeq" id="WP_000146861.1">
    <property type="nucleotide sequence ID" value="NC_010380.1"/>
</dbReference>
<dbReference type="SMR" id="B1I9J8"/>
<dbReference type="KEGG" id="spv:SPH_0512"/>
<dbReference type="HOGENOM" id="CLU_059546_1_0_9"/>
<dbReference type="Proteomes" id="UP000002163">
    <property type="component" value="Chromosome"/>
</dbReference>
<dbReference type="GO" id="GO:0005737">
    <property type="term" value="C:cytoplasm"/>
    <property type="evidence" value="ECO:0007669"/>
    <property type="project" value="UniProtKB-SubCell"/>
</dbReference>
<dbReference type="GO" id="GO:0032299">
    <property type="term" value="C:ribonuclease H2 complex"/>
    <property type="evidence" value="ECO:0007669"/>
    <property type="project" value="TreeGrafter"/>
</dbReference>
<dbReference type="GO" id="GO:0000287">
    <property type="term" value="F:magnesium ion binding"/>
    <property type="evidence" value="ECO:0007669"/>
    <property type="project" value="UniProtKB-UniRule"/>
</dbReference>
<dbReference type="GO" id="GO:0003723">
    <property type="term" value="F:RNA binding"/>
    <property type="evidence" value="ECO:0007669"/>
    <property type="project" value="InterPro"/>
</dbReference>
<dbReference type="GO" id="GO:0004523">
    <property type="term" value="F:RNA-DNA hybrid ribonuclease activity"/>
    <property type="evidence" value="ECO:0007669"/>
    <property type="project" value="UniProtKB-UniRule"/>
</dbReference>
<dbReference type="GO" id="GO:0043137">
    <property type="term" value="P:DNA replication, removal of RNA primer"/>
    <property type="evidence" value="ECO:0007669"/>
    <property type="project" value="TreeGrafter"/>
</dbReference>
<dbReference type="GO" id="GO:0006298">
    <property type="term" value="P:mismatch repair"/>
    <property type="evidence" value="ECO:0007669"/>
    <property type="project" value="TreeGrafter"/>
</dbReference>
<dbReference type="CDD" id="cd06590">
    <property type="entry name" value="RNase_HII_bacteria_HIII_like"/>
    <property type="match status" value="1"/>
</dbReference>
<dbReference type="CDD" id="cd14796">
    <property type="entry name" value="RNAse_HIII_N"/>
    <property type="match status" value="1"/>
</dbReference>
<dbReference type="FunFam" id="3.30.420.10:FF:000047">
    <property type="entry name" value="Ribonuclease HIII"/>
    <property type="match status" value="1"/>
</dbReference>
<dbReference type="Gene3D" id="3.30.420.10">
    <property type="entry name" value="Ribonuclease H-like superfamily/Ribonuclease H"/>
    <property type="match status" value="1"/>
</dbReference>
<dbReference type="Gene3D" id="3.30.310.10">
    <property type="entry name" value="TATA-Binding Protein"/>
    <property type="match status" value="1"/>
</dbReference>
<dbReference type="HAMAP" id="MF_00053">
    <property type="entry name" value="RNase_HIII"/>
    <property type="match status" value="1"/>
</dbReference>
<dbReference type="InterPro" id="IPR001352">
    <property type="entry name" value="RNase_HII/HIII"/>
</dbReference>
<dbReference type="InterPro" id="IPR024567">
    <property type="entry name" value="RNase_HII/HIII_dom"/>
</dbReference>
<dbReference type="InterPro" id="IPR004641">
    <property type="entry name" value="RNase_HIII"/>
</dbReference>
<dbReference type="InterPro" id="IPR024568">
    <property type="entry name" value="RNase_HIII_N"/>
</dbReference>
<dbReference type="InterPro" id="IPR012337">
    <property type="entry name" value="RNaseH-like_sf"/>
</dbReference>
<dbReference type="InterPro" id="IPR036397">
    <property type="entry name" value="RNaseH_sf"/>
</dbReference>
<dbReference type="InterPro" id="IPR012295">
    <property type="entry name" value="TBP_dom_sf"/>
</dbReference>
<dbReference type="NCBIfam" id="TIGR00716">
    <property type="entry name" value="rnhC"/>
    <property type="match status" value="1"/>
</dbReference>
<dbReference type="PANTHER" id="PTHR10954:SF23">
    <property type="entry name" value="RIBONUCLEASE"/>
    <property type="match status" value="1"/>
</dbReference>
<dbReference type="PANTHER" id="PTHR10954">
    <property type="entry name" value="RIBONUCLEASE H2 SUBUNIT A"/>
    <property type="match status" value="1"/>
</dbReference>
<dbReference type="Pfam" id="PF11858">
    <property type="entry name" value="DUF3378"/>
    <property type="match status" value="1"/>
</dbReference>
<dbReference type="Pfam" id="PF01351">
    <property type="entry name" value="RNase_HII"/>
    <property type="match status" value="1"/>
</dbReference>
<dbReference type="PIRSF" id="PIRSF037748">
    <property type="entry name" value="RnhC"/>
    <property type="match status" value="1"/>
</dbReference>
<dbReference type="SUPFAM" id="SSF53098">
    <property type="entry name" value="Ribonuclease H-like"/>
    <property type="match status" value="1"/>
</dbReference>
<dbReference type="PROSITE" id="PS51975">
    <property type="entry name" value="RNASE_H_2"/>
    <property type="match status" value="1"/>
</dbReference>
<gene>
    <name evidence="1" type="primary">rnhC</name>
    <name type="ordered locus">SPH_0512</name>
</gene>
<reference key="1">
    <citation type="journal article" date="2010" name="Genome Biol.">
        <title>Structure and dynamics of the pan-genome of Streptococcus pneumoniae and closely related species.</title>
        <authorList>
            <person name="Donati C."/>
            <person name="Hiller N.L."/>
            <person name="Tettelin H."/>
            <person name="Muzzi A."/>
            <person name="Croucher N.J."/>
            <person name="Angiuoli S.V."/>
            <person name="Oggioni M."/>
            <person name="Dunning Hotopp J.C."/>
            <person name="Hu F.Z."/>
            <person name="Riley D.R."/>
            <person name="Covacci A."/>
            <person name="Mitchell T.J."/>
            <person name="Bentley S.D."/>
            <person name="Kilian M."/>
            <person name="Ehrlich G.D."/>
            <person name="Rappuoli R."/>
            <person name="Moxon E.R."/>
            <person name="Masignani V."/>
        </authorList>
    </citation>
    <scope>NUCLEOTIDE SEQUENCE [LARGE SCALE GENOMIC DNA]</scope>
    <source>
        <strain>Hungary19A-6</strain>
    </source>
</reference>
<keyword id="KW-0963">Cytoplasm</keyword>
<keyword id="KW-0255">Endonuclease</keyword>
<keyword id="KW-0378">Hydrolase</keyword>
<keyword id="KW-0460">Magnesium</keyword>
<keyword id="KW-0479">Metal-binding</keyword>
<keyword id="KW-0540">Nuclease</keyword>
<protein>
    <recommendedName>
        <fullName evidence="1">Ribonuclease HIII</fullName>
        <shortName evidence="1">RNase HIII</shortName>
        <ecNumber evidence="1">3.1.26.4</ecNumber>
    </recommendedName>
</protein>